<evidence type="ECO:0000255" key="1">
    <source>
        <dbReference type="HAMAP-Rule" id="MF_01858"/>
    </source>
</evidence>
<accession>Q6D459</accession>
<name>RLMKL_PECAS</name>
<comment type="function">
    <text evidence="1">Specifically methylates the guanine in position 2445 (m2G2445) and the guanine in position 2069 (m7G2069) of 23S rRNA.</text>
</comment>
<comment type="catalytic activity">
    <reaction evidence="1">
        <text>guanosine(2445) in 23S rRNA + S-adenosyl-L-methionine = N(2)-methylguanosine(2445) in 23S rRNA + S-adenosyl-L-homocysteine + H(+)</text>
        <dbReference type="Rhea" id="RHEA:42740"/>
        <dbReference type="Rhea" id="RHEA-COMP:10215"/>
        <dbReference type="Rhea" id="RHEA-COMP:10216"/>
        <dbReference type="ChEBI" id="CHEBI:15378"/>
        <dbReference type="ChEBI" id="CHEBI:57856"/>
        <dbReference type="ChEBI" id="CHEBI:59789"/>
        <dbReference type="ChEBI" id="CHEBI:74269"/>
        <dbReference type="ChEBI" id="CHEBI:74481"/>
        <dbReference type="EC" id="2.1.1.173"/>
    </reaction>
</comment>
<comment type="catalytic activity">
    <reaction evidence="1">
        <text>guanosine(2069) in 23S rRNA + S-adenosyl-L-methionine = N(2)-methylguanosine(2069) in 23S rRNA + S-adenosyl-L-homocysteine + H(+)</text>
        <dbReference type="Rhea" id="RHEA:43772"/>
        <dbReference type="Rhea" id="RHEA-COMP:10688"/>
        <dbReference type="Rhea" id="RHEA-COMP:10689"/>
        <dbReference type="ChEBI" id="CHEBI:15378"/>
        <dbReference type="ChEBI" id="CHEBI:57856"/>
        <dbReference type="ChEBI" id="CHEBI:59789"/>
        <dbReference type="ChEBI" id="CHEBI:74269"/>
        <dbReference type="ChEBI" id="CHEBI:74481"/>
        <dbReference type="EC" id="2.1.1.264"/>
    </reaction>
</comment>
<comment type="subcellular location">
    <subcellularLocation>
        <location evidence="1">Cytoplasm</location>
    </subcellularLocation>
</comment>
<comment type="similarity">
    <text evidence="1">Belongs to the methyltransferase superfamily. RlmKL family.</text>
</comment>
<feature type="chain" id="PRO_0000366737" description="Ribosomal RNA large subunit methyltransferase K/L">
    <location>
        <begin position="1"/>
        <end position="705"/>
    </location>
</feature>
<feature type="domain" description="THUMP" evidence="1">
    <location>
        <begin position="43"/>
        <end position="154"/>
    </location>
</feature>
<gene>
    <name evidence="1" type="primary">rlmL</name>
    <name type="ordered locus">ECA2535</name>
</gene>
<organism>
    <name type="scientific">Pectobacterium atrosepticum (strain SCRI 1043 / ATCC BAA-672)</name>
    <name type="common">Erwinia carotovora subsp. atroseptica</name>
    <dbReference type="NCBI Taxonomy" id="218491"/>
    <lineage>
        <taxon>Bacteria</taxon>
        <taxon>Pseudomonadati</taxon>
        <taxon>Pseudomonadota</taxon>
        <taxon>Gammaproteobacteria</taxon>
        <taxon>Enterobacterales</taxon>
        <taxon>Pectobacteriaceae</taxon>
        <taxon>Pectobacterium</taxon>
    </lineage>
</organism>
<reference key="1">
    <citation type="journal article" date="2004" name="Proc. Natl. Acad. Sci. U.S.A.">
        <title>Genome sequence of the enterobacterial phytopathogen Erwinia carotovora subsp. atroseptica and characterization of virulence factors.</title>
        <authorList>
            <person name="Bell K.S."/>
            <person name="Sebaihia M."/>
            <person name="Pritchard L."/>
            <person name="Holden M.T.G."/>
            <person name="Hyman L.J."/>
            <person name="Holeva M.C."/>
            <person name="Thomson N.R."/>
            <person name="Bentley S.D."/>
            <person name="Churcher L.J.C."/>
            <person name="Mungall K."/>
            <person name="Atkin R."/>
            <person name="Bason N."/>
            <person name="Brooks K."/>
            <person name="Chillingworth T."/>
            <person name="Clark K."/>
            <person name="Doggett J."/>
            <person name="Fraser A."/>
            <person name="Hance Z."/>
            <person name="Hauser H."/>
            <person name="Jagels K."/>
            <person name="Moule S."/>
            <person name="Norbertczak H."/>
            <person name="Ormond D."/>
            <person name="Price C."/>
            <person name="Quail M.A."/>
            <person name="Sanders M."/>
            <person name="Walker D."/>
            <person name="Whitehead S."/>
            <person name="Salmond G.P.C."/>
            <person name="Birch P.R.J."/>
            <person name="Parkhill J."/>
            <person name="Toth I.K."/>
        </authorList>
    </citation>
    <scope>NUCLEOTIDE SEQUENCE [LARGE SCALE GENOMIC DNA]</scope>
    <source>
        <strain>SCRI 1043 / ATCC BAA-672</strain>
    </source>
</reference>
<keyword id="KW-0963">Cytoplasm</keyword>
<keyword id="KW-0489">Methyltransferase</keyword>
<keyword id="KW-1185">Reference proteome</keyword>
<keyword id="KW-0694">RNA-binding</keyword>
<keyword id="KW-0698">rRNA processing</keyword>
<keyword id="KW-0949">S-adenosyl-L-methionine</keyword>
<keyword id="KW-0808">Transferase</keyword>
<proteinExistence type="inferred from homology"/>
<protein>
    <recommendedName>
        <fullName evidence="1">Ribosomal RNA large subunit methyltransferase K/L</fullName>
    </recommendedName>
    <domain>
        <recommendedName>
            <fullName evidence="1">23S rRNA m2G2445 methyltransferase</fullName>
            <ecNumber evidence="1">2.1.1.173</ecNumber>
        </recommendedName>
        <alternativeName>
            <fullName evidence="1">rRNA (guanine-N(2)-)-methyltransferase RlmL</fullName>
        </alternativeName>
    </domain>
    <domain>
        <recommendedName>
            <fullName evidence="1">23S rRNA m7G2069 methyltransferase</fullName>
            <ecNumber evidence="1">2.1.1.264</ecNumber>
        </recommendedName>
        <alternativeName>
            <fullName evidence="1">rRNA (guanine-N(7)-)-methyltransferase RlmK</fullName>
        </alternativeName>
    </domain>
</protein>
<sequence>MNALFASTARGLEELLKSELESLGAQSCAVVQGGVHFEGDNRLLYQSLLWSRLASRILLPLNEFKVHSDLDLYLGVQAIDWSTIFSIDKTFAVHFTGTNEDIRNSQYGALKVKDAIVDSFTRKTGQRPDVAKQQPDIRVNVFLQRDTASVALDLSGEGLHQRGYRDLAGLAPLKENLAAAIVSRSGWQNGTPMVDPMCGSGTLLIEAAMIASDRAPGLHRTHWGFNAWLKHDAELWHELTSEAQQRASQGLQATTSRFFGSDNDRRVIEIAKANARRAGVAELISFGVKDAAQLQNPLPEGPKGTVISNPPYGERLESEPALIALHNMLGRKMKSDFGGWQLSLFSASPELLSCLQLRAERQFKAKNGPLDCVQKNYQLADTQGESAGQIAEDFANRLRKNLRKLEKWAKQQGIECYRIYDADLPEYNVAVDRYGSWVVVQEYAPPKTIDAQKARQRLFDVINATLIVLELPSNRLVLKTRERQKGKNQYEKLAQKGDFLLMEEFGAKLWVNLTDYLDTGLFLDHRIARKMLGEMSRGKDFLNLFAYTGTASVHAGLGGARSTTTVDMSRTYLEWAEKNLRVNGLTGRQHRLIQADCLSWLHNGHEQFDVIFIDPPTFSNSKRMEESFDVQRDHLALMKDLKRLLRRGGTIMFSNNKRGFQMDIAGLTALGLNAKEITAQTQSQDFARNRQIHNCWLLTHAGEEK</sequence>
<dbReference type="EC" id="2.1.1.173" evidence="1"/>
<dbReference type="EC" id="2.1.1.264" evidence="1"/>
<dbReference type="EMBL" id="BX950851">
    <property type="protein sequence ID" value="CAG75434.1"/>
    <property type="molecule type" value="Genomic_DNA"/>
</dbReference>
<dbReference type="SMR" id="Q6D459"/>
<dbReference type="STRING" id="218491.ECA2535"/>
<dbReference type="KEGG" id="eca:ECA2535"/>
<dbReference type="PATRIC" id="fig|218491.5.peg.2567"/>
<dbReference type="eggNOG" id="COG0116">
    <property type="taxonomic scope" value="Bacteria"/>
</dbReference>
<dbReference type="eggNOG" id="COG1092">
    <property type="taxonomic scope" value="Bacteria"/>
</dbReference>
<dbReference type="HOGENOM" id="CLU_014042_2_0_6"/>
<dbReference type="OrthoDB" id="9809404at2"/>
<dbReference type="Proteomes" id="UP000007966">
    <property type="component" value="Chromosome"/>
</dbReference>
<dbReference type="GO" id="GO:0005737">
    <property type="term" value="C:cytoplasm"/>
    <property type="evidence" value="ECO:0007669"/>
    <property type="project" value="UniProtKB-SubCell"/>
</dbReference>
<dbReference type="GO" id="GO:0052915">
    <property type="term" value="F:23S rRNA (guanine(2445)-N(2))-methyltransferase activity"/>
    <property type="evidence" value="ECO:0007669"/>
    <property type="project" value="UniProtKB-UniRule"/>
</dbReference>
<dbReference type="GO" id="GO:0003723">
    <property type="term" value="F:RNA binding"/>
    <property type="evidence" value="ECO:0007669"/>
    <property type="project" value="UniProtKB-KW"/>
</dbReference>
<dbReference type="GO" id="GO:0070043">
    <property type="term" value="F:rRNA (guanine-N7-)-methyltransferase activity"/>
    <property type="evidence" value="ECO:0007669"/>
    <property type="project" value="UniProtKB-UniRule"/>
</dbReference>
<dbReference type="CDD" id="cd02440">
    <property type="entry name" value="AdoMet_MTases"/>
    <property type="match status" value="1"/>
</dbReference>
<dbReference type="CDD" id="cd11715">
    <property type="entry name" value="THUMP_AdoMetMT"/>
    <property type="match status" value="1"/>
</dbReference>
<dbReference type="FunFam" id="3.30.750.80:FF:000001">
    <property type="entry name" value="Ribosomal RNA large subunit methyltransferase K/L"/>
    <property type="match status" value="1"/>
</dbReference>
<dbReference type="FunFam" id="3.40.50.150:FF:000039">
    <property type="entry name" value="Ribosomal RNA large subunit methyltransferase K/L"/>
    <property type="match status" value="1"/>
</dbReference>
<dbReference type="Gene3D" id="3.30.2130.30">
    <property type="match status" value="1"/>
</dbReference>
<dbReference type="Gene3D" id="3.30.750.80">
    <property type="entry name" value="RNA methyltransferase domain (HRMD) like"/>
    <property type="match status" value="1"/>
</dbReference>
<dbReference type="Gene3D" id="3.40.50.150">
    <property type="entry name" value="Vaccinia Virus protein VP39"/>
    <property type="match status" value="2"/>
</dbReference>
<dbReference type="HAMAP" id="MF_01858">
    <property type="entry name" value="23SrRNA_methyltr_KL"/>
    <property type="match status" value="1"/>
</dbReference>
<dbReference type="InterPro" id="IPR017244">
    <property type="entry name" value="23SrRNA_methyltr_KL"/>
</dbReference>
<dbReference type="InterPro" id="IPR002052">
    <property type="entry name" value="DNA_methylase_N6_adenine_CS"/>
</dbReference>
<dbReference type="InterPro" id="IPR000241">
    <property type="entry name" value="RlmKL-like_Mtase"/>
</dbReference>
<dbReference type="InterPro" id="IPR053943">
    <property type="entry name" value="RlmKL-like_Mtase_CS"/>
</dbReference>
<dbReference type="InterPro" id="IPR054170">
    <property type="entry name" value="RlmL_1st"/>
</dbReference>
<dbReference type="InterPro" id="IPR019614">
    <property type="entry name" value="SAM-dep_methyl-trfase"/>
</dbReference>
<dbReference type="InterPro" id="IPR029063">
    <property type="entry name" value="SAM-dependent_MTases_sf"/>
</dbReference>
<dbReference type="InterPro" id="IPR004114">
    <property type="entry name" value="THUMP_dom"/>
</dbReference>
<dbReference type="NCBIfam" id="NF008748">
    <property type="entry name" value="PRK11783.1"/>
    <property type="match status" value="1"/>
</dbReference>
<dbReference type="PANTHER" id="PTHR47313">
    <property type="entry name" value="RIBOSOMAL RNA LARGE SUBUNIT METHYLTRANSFERASE K/L"/>
    <property type="match status" value="1"/>
</dbReference>
<dbReference type="PANTHER" id="PTHR47313:SF1">
    <property type="entry name" value="RIBOSOMAL RNA LARGE SUBUNIT METHYLTRANSFERASE K_L"/>
    <property type="match status" value="1"/>
</dbReference>
<dbReference type="Pfam" id="PF10672">
    <property type="entry name" value="Methyltrans_SAM"/>
    <property type="match status" value="1"/>
</dbReference>
<dbReference type="Pfam" id="PF22020">
    <property type="entry name" value="RlmL_1st"/>
    <property type="match status" value="1"/>
</dbReference>
<dbReference type="Pfam" id="PF02926">
    <property type="entry name" value="THUMP"/>
    <property type="match status" value="1"/>
</dbReference>
<dbReference type="Pfam" id="PF01170">
    <property type="entry name" value="UPF0020"/>
    <property type="match status" value="1"/>
</dbReference>
<dbReference type="PIRSF" id="PIRSF037618">
    <property type="entry name" value="RNA_Mtase_bacteria_prd"/>
    <property type="match status" value="1"/>
</dbReference>
<dbReference type="SMART" id="SM00981">
    <property type="entry name" value="THUMP"/>
    <property type="match status" value="1"/>
</dbReference>
<dbReference type="SUPFAM" id="SSF53335">
    <property type="entry name" value="S-adenosyl-L-methionine-dependent methyltransferases"/>
    <property type="match status" value="2"/>
</dbReference>
<dbReference type="PROSITE" id="PS51165">
    <property type="entry name" value="THUMP"/>
    <property type="match status" value="1"/>
</dbReference>
<dbReference type="PROSITE" id="PS01261">
    <property type="entry name" value="UPF0020"/>
    <property type="match status" value="1"/>
</dbReference>